<accession>Q9TU71</accession>
<reference key="1">
    <citation type="journal article" date="1999" name="Biochim. Biophys. Acta">
        <title>Molecular cloning of rabbit CARP cDNA and its regulated expression in adriamycin-cardiomyopathy.</title>
        <authorList>
            <person name="Aihara Y."/>
            <person name="Kurabayashi M."/>
            <person name="Arai M."/>
            <person name="Kedes L."/>
            <person name="Nagai R."/>
        </authorList>
    </citation>
    <scope>NUCLEOTIDE SEQUENCE [MRNA]</scope>
    <scope>INDUCTION BY DOXORUBICIN</scope>
    <source>
        <tissue>Heart</tissue>
    </source>
</reference>
<feature type="chain" id="PRO_0000240482" description="Ankyrin repeat domain-containing protein 1">
    <location>
        <begin position="1"/>
        <end position="319"/>
    </location>
</feature>
<feature type="repeat" description="ANK 1">
    <location>
        <begin position="152"/>
        <end position="181"/>
    </location>
</feature>
<feature type="repeat" description="ANK 2">
    <location>
        <begin position="185"/>
        <end position="214"/>
    </location>
</feature>
<feature type="repeat" description="ANK 3">
    <location>
        <begin position="218"/>
        <end position="247"/>
    </location>
</feature>
<feature type="repeat" description="ANK 4">
    <location>
        <begin position="251"/>
        <end position="280"/>
    </location>
</feature>
<feature type="repeat" description="ANK 5">
    <location>
        <begin position="284"/>
        <end position="315"/>
    </location>
</feature>
<feature type="coiled-coil region" evidence="2">
    <location>
        <begin position="63"/>
        <end position="89"/>
    </location>
</feature>
<name>ANKR1_RABIT</name>
<sequence length="319" mass="36246">MMVLKVEELVTGKKSSNGETGEFLPDDFRDGQYEAAVTSEKQEDLKTLPAHHVSLAEQQWEREKQLEAELKKKKLEQRSKLENLEDLEIIIQLKKRKKYRKTKVPVAKEPEPEIITEPVDVPRFLKAALENKLAVVEKFLSDQNNPDVCDEYKRTALHRACLEGHLAIVEKLMEAGAQIEFRDMLESTAIHWACRGGNLEVLKLLLNKGAKISARDKLLSTALHVAVRTGHYECAEHLIACEADLNAKDREGDTPLHDAVRLNRYKMIRLLIMYGADLTIKNSAGKTPMDLVLNWQNGTKAIFDSLKENSYKTSRIATF</sequence>
<organism>
    <name type="scientific">Oryctolagus cuniculus</name>
    <name type="common">Rabbit</name>
    <dbReference type="NCBI Taxonomy" id="9986"/>
    <lineage>
        <taxon>Eukaryota</taxon>
        <taxon>Metazoa</taxon>
        <taxon>Chordata</taxon>
        <taxon>Craniata</taxon>
        <taxon>Vertebrata</taxon>
        <taxon>Euteleostomi</taxon>
        <taxon>Mammalia</taxon>
        <taxon>Eutheria</taxon>
        <taxon>Euarchontoglires</taxon>
        <taxon>Glires</taxon>
        <taxon>Lagomorpha</taxon>
        <taxon>Leporidae</taxon>
        <taxon>Oryctolagus</taxon>
    </lineage>
</organism>
<proteinExistence type="evidence at transcript level"/>
<comment type="function">
    <text evidence="1">May play an important role in endothelial cell activation. May act as a nuclear transcription factor that negatively regulates the expression of cardiac genes (By similarity).</text>
</comment>
<comment type="subunit">
    <text evidence="1">Interacts with TTN/titin and YBX1.</text>
</comment>
<comment type="subcellular location">
    <subcellularLocation>
        <location evidence="1">Nucleus</location>
    </subcellularLocation>
</comment>
<comment type="induction">
    <text evidence="3">Down-regulated by doxorubicin (adriamycin), in vitro.</text>
</comment>
<dbReference type="EMBL" id="AF131883">
    <property type="protein sequence ID" value="AAF13817.1"/>
    <property type="molecule type" value="mRNA"/>
</dbReference>
<dbReference type="RefSeq" id="NP_001075523.1">
    <property type="nucleotide sequence ID" value="NM_001082054.1"/>
</dbReference>
<dbReference type="SMR" id="Q9TU71"/>
<dbReference type="FunCoup" id="Q9TU71">
    <property type="interactions" value="68"/>
</dbReference>
<dbReference type="STRING" id="9986.ENSOCUP00000005966"/>
<dbReference type="PaxDb" id="9986-ENSOCUP00000005966"/>
<dbReference type="GeneID" id="100008719"/>
<dbReference type="KEGG" id="ocu:100008719"/>
<dbReference type="CTD" id="27063"/>
<dbReference type="eggNOG" id="KOG0504">
    <property type="taxonomic scope" value="Eukaryota"/>
</dbReference>
<dbReference type="InParanoid" id="Q9TU71"/>
<dbReference type="OrthoDB" id="426293at2759"/>
<dbReference type="Proteomes" id="UP000001811">
    <property type="component" value="Unplaced"/>
</dbReference>
<dbReference type="GO" id="GO:0005737">
    <property type="term" value="C:cytoplasm"/>
    <property type="evidence" value="ECO:0007669"/>
    <property type="project" value="UniProtKB-ARBA"/>
</dbReference>
<dbReference type="GO" id="GO:0005634">
    <property type="term" value="C:nucleus"/>
    <property type="evidence" value="ECO:0007669"/>
    <property type="project" value="UniProtKB-SubCell"/>
</dbReference>
<dbReference type="GO" id="GO:0061629">
    <property type="term" value="F:RNA polymerase II-specific DNA-binding transcription factor binding"/>
    <property type="evidence" value="ECO:0007669"/>
    <property type="project" value="TreeGrafter"/>
</dbReference>
<dbReference type="GO" id="GO:0006357">
    <property type="term" value="P:regulation of transcription by RNA polymerase II"/>
    <property type="evidence" value="ECO:0007669"/>
    <property type="project" value="TreeGrafter"/>
</dbReference>
<dbReference type="FunFam" id="1.25.40.20:FF:000111">
    <property type="entry name" value="Ankyrin repeat domain-containing protein 1"/>
    <property type="match status" value="1"/>
</dbReference>
<dbReference type="FunFam" id="1.25.40.20:FF:000369">
    <property type="entry name" value="Ankyrin repeat domain-containing protein 1"/>
    <property type="match status" value="1"/>
</dbReference>
<dbReference type="Gene3D" id="1.25.40.20">
    <property type="entry name" value="Ankyrin repeat-containing domain"/>
    <property type="match status" value="2"/>
</dbReference>
<dbReference type="InterPro" id="IPR002110">
    <property type="entry name" value="Ankyrin_rpt"/>
</dbReference>
<dbReference type="InterPro" id="IPR036770">
    <property type="entry name" value="Ankyrin_rpt-contain_sf"/>
</dbReference>
<dbReference type="PANTHER" id="PTHR24126:SF7">
    <property type="entry name" value="ANKYRIN REPEAT DOMAIN-CONTAINING PROTEIN 1"/>
    <property type="match status" value="1"/>
</dbReference>
<dbReference type="PANTHER" id="PTHR24126">
    <property type="entry name" value="ANKYRIN REPEAT, PH AND SEC7 DOMAIN CONTAINING PROTEIN SECG-RELATED"/>
    <property type="match status" value="1"/>
</dbReference>
<dbReference type="Pfam" id="PF12796">
    <property type="entry name" value="Ank_2"/>
    <property type="match status" value="2"/>
</dbReference>
<dbReference type="SMART" id="SM00248">
    <property type="entry name" value="ANK"/>
    <property type="match status" value="4"/>
</dbReference>
<dbReference type="SUPFAM" id="SSF48403">
    <property type="entry name" value="Ankyrin repeat"/>
    <property type="match status" value="1"/>
</dbReference>
<dbReference type="PROSITE" id="PS50297">
    <property type="entry name" value="ANK_REP_REGION"/>
    <property type="match status" value="1"/>
</dbReference>
<dbReference type="PROSITE" id="PS50088">
    <property type="entry name" value="ANK_REPEAT"/>
    <property type="match status" value="4"/>
</dbReference>
<gene>
    <name type="primary">ANKRD1</name>
    <name type="synonym">CARP</name>
</gene>
<protein>
    <recommendedName>
        <fullName>Ankyrin repeat domain-containing protein 1</fullName>
    </recommendedName>
    <alternativeName>
        <fullName>Cardiac adriamycin-responsive protein</fullName>
    </alternativeName>
    <alternativeName>
        <fullName>Cardiac ankyrin repeat protein</fullName>
    </alternativeName>
</protein>
<keyword id="KW-0040">ANK repeat</keyword>
<keyword id="KW-0175">Coiled coil</keyword>
<keyword id="KW-0539">Nucleus</keyword>
<keyword id="KW-1185">Reference proteome</keyword>
<keyword id="KW-0677">Repeat</keyword>
<evidence type="ECO:0000250" key="1"/>
<evidence type="ECO:0000255" key="2"/>
<evidence type="ECO:0000269" key="3">
    <source>
    </source>
</evidence>